<keyword id="KW-1015">Disulfide bond</keyword>
<keyword id="KW-0325">Glycoprotein</keyword>
<keyword id="KW-0372">Hormone</keyword>
<keyword id="KW-0964">Secreted</keyword>
<keyword id="KW-0732">Signal</keyword>
<dbReference type="EMBL" id="L35096">
    <property type="protein sequence ID" value="AAC38019.1"/>
    <property type="status" value="ALT_INIT"/>
    <property type="molecule type" value="mRNA"/>
</dbReference>
<dbReference type="PIR" id="I50994">
    <property type="entry name" value="I50994"/>
</dbReference>
<dbReference type="SMR" id="Q91121"/>
<dbReference type="GlyCosmos" id="Q91121">
    <property type="glycosylation" value="1 site, No reported glycans"/>
</dbReference>
<dbReference type="GO" id="GO:0005737">
    <property type="term" value="C:cytoplasm"/>
    <property type="evidence" value="ECO:0007669"/>
    <property type="project" value="TreeGrafter"/>
</dbReference>
<dbReference type="GO" id="GO:0005615">
    <property type="term" value="C:extracellular space"/>
    <property type="evidence" value="ECO:0007669"/>
    <property type="project" value="TreeGrafter"/>
</dbReference>
<dbReference type="GO" id="GO:0005179">
    <property type="term" value="F:hormone activity"/>
    <property type="evidence" value="ECO:0007669"/>
    <property type="project" value="UniProtKB-KW"/>
</dbReference>
<dbReference type="GO" id="GO:0007186">
    <property type="term" value="P:G protein-coupled receptor signaling pathway"/>
    <property type="evidence" value="ECO:0007669"/>
    <property type="project" value="TreeGrafter"/>
</dbReference>
<dbReference type="GO" id="GO:0030728">
    <property type="term" value="P:ovulation"/>
    <property type="evidence" value="ECO:0007669"/>
    <property type="project" value="TreeGrafter"/>
</dbReference>
<dbReference type="CDD" id="cd00069">
    <property type="entry name" value="GHB_like"/>
    <property type="match status" value="1"/>
</dbReference>
<dbReference type="FunFam" id="2.10.90.10:FF:000007">
    <property type="entry name" value="Luteinizing hormone beta subunit"/>
    <property type="match status" value="1"/>
</dbReference>
<dbReference type="Gene3D" id="2.10.90.10">
    <property type="entry name" value="Cystine-knot cytokines"/>
    <property type="match status" value="1"/>
</dbReference>
<dbReference type="InterPro" id="IPR029034">
    <property type="entry name" value="Cystine-knot_cytokine"/>
</dbReference>
<dbReference type="InterPro" id="IPR006208">
    <property type="entry name" value="Glyco_hormone_CN"/>
</dbReference>
<dbReference type="InterPro" id="IPR001545">
    <property type="entry name" value="Gonadotropin_bsu"/>
</dbReference>
<dbReference type="InterPro" id="IPR018245">
    <property type="entry name" value="Gonadotropin_bsu_CS"/>
</dbReference>
<dbReference type="PANTHER" id="PTHR11515">
    <property type="entry name" value="GLYCOPROTEIN HORMONE BETA CHAIN"/>
    <property type="match status" value="1"/>
</dbReference>
<dbReference type="PANTHER" id="PTHR11515:SF11">
    <property type="entry name" value="LUTROPIN SUBUNIT BETA"/>
    <property type="match status" value="1"/>
</dbReference>
<dbReference type="Pfam" id="PF00007">
    <property type="entry name" value="Cys_knot"/>
    <property type="match status" value="1"/>
</dbReference>
<dbReference type="SMART" id="SM00068">
    <property type="entry name" value="GHB"/>
    <property type="match status" value="1"/>
</dbReference>
<dbReference type="SUPFAM" id="SSF57501">
    <property type="entry name" value="Cystine-knot cytokines"/>
    <property type="match status" value="1"/>
</dbReference>
<dbReference type="PROSITE" id="PS00261">
    <property type="entry name" value="GLYCO_HORMONE_BETA_1"/>
    <property type="match status" value="1"/>
</dbReference>
<dbReference type="PROSITE" id="PS00689">
    <property type="entry name" value="GLYCO_HORMONE_BETA_2"/>
    <property type="match status" value="1"/>
</dbReference>
<organism>
    <name type="scientific">Morone saxatilis</name>
    <name type="common">Striped bass</name>
    <name type="synonym">Perca saxatilis</name>
    <dbReference type="NCBI Taxonomy" id="34816"/>
    <lineage>
        <taxon>Eukaryota</taxon>
        <taxon>Metazoa</taxon>
        <taxon>Chordata</taxon>
        <taxon>Craniata</taxon>
        <taxon>Vertebrata</taxon>
        <taxon>Euteleostomi</taxon>
        <taxon>Actinopterygii</taxon>
        <taxon>Neopterygii</taxon>
        <taxon>Teleostei</taxon>
        <taxon>Neoteleostei</taxon>
        <taxon>Acanthomorphata</taxon>
        <taxon>Eupercaria</taxon>
        <taxon>Moronidae</taxon>
        <taxon>Morone</taxon>
    </lineage>
</organism>
<protein>
    <recommendedName>
        <fullName>Gonadotropin subunit beta-2</fullName>
    </recommendedName>
    <alternativeName>
        <fullName>GTH-II-beta</fullName>
    </alternativeName>
    <alternativeName>
        <fullName>Gonadotropin beta-II chain</fullName>
    </alternativeName>
</protein>
<sequence length="139" mass="15555">MFPLVLSLFLGATSDIWPLAPAEAFQLPPCQLINQTVSLEKEGCPKCHPVETTICSGHCITKDPVIKIPFSNVYQHVCTYRDLHYKTFELPDCPPGVDPTVTYPVAQSCHCGRCAMDTSDCTFESLQPNFCMNDIPFYY</sequence>
<comment type="function">
    <text>Involved in gametogenesis and steroidogenesis.</text>
</comment>
<comment type="subunit">
    <text>Heterodimer of an alpha and a beta chain.</text>
</comment>
<comment type="subcellular location">
    <subcellularLocation>
        <location>Secreted</location>
    </subcellularLocation>
</comment>
<comment type="similarity">
    <text evidence="3">Belongs to the glycoprotein hormones subunit beta family.</text>
</comment>
<comment type="sequence caution" evidence="3">
    <conflict type="erroneous initiation">
        <sequence resource="EMBL-CDS" id="AAC38019"/>
    </conflict>
</comment>
<proteinExistence type="evidence at transcript level"/>
<accession>Q91121</accession>
<feature type="signal peptide" evidence="2">
    <location>
        <begin position="1"/>
        <end position="24"/>
    </location>
</feature>
<feature type="chain" id="PRO_0000011698" description="Gonadotropin subunit beta-2">
    <location>
        <begin position="25"/>
        <end position="139"/>
    </location>
</feature>
<feature type="glycosylation site" description="N-linked (GlcNAc...) asparagine" evidence="2">
    <location>
        <position position="34"/>
    </location>
</feature>
<feature type="disulfide bond" evidence="1">
    <location>
        <begin position="30"/>
        <end position="78"/>
    </location>
</feature>
<feature type="disulfide bond" evidence="1">
    <location>
        <begin position="44"/>
        <end position="93"/>
    </location>
</feature>
<feature type="disulfide bond" evidence="1">
    <location>
        <begin position="47"/>
        <end position="131"/>
    </location>
</feature>
<feature type="disulfide bond" evidence="1">
    <location>
        <begin position="55"/>
        <end position="109"/>
    </location>
</feature>
<feature type="disulfide bond" evidence="1">
    <location>
        <begin position="59"/>
        <end position="111"/>
    </location>
</feature>
<feature type="disulfide bond" evidence="1">
    <location>
        <begin position="114"/>
        <end position="121"/>
    </location>
</feature>
<gene>
    <name type="primary">cgbb</name>
</gene>
<reference key="1">
    <citation type="journal article" date="1995" name="J. Mol. Endocrinol.">
        <title>Molecular cloning and sequence analysis of striped bass (Morone saxatilis) gonadotrophin-I and -II subunits.</title>
        <authorList>
            <person name="Hassin S."/>
            <person name="Elizur A."/>
            <person name="Zohar Y."/>
        </authorList>
    </citation>
    <scope>NUCLEOTIDE SEQUENCE [MRNA]</scope>
    <source>
        <tissue>Pituitary</tissue>
    </source>
</reference>
<evidence type="ECO:0000250" key="1"/>
<evidence type="ECO:0000255" key="2"/>
<evidence type="ECO:0000305" key="3"/>
<name>GTHB2_MORSA</name>